<dbReference type="EMBL" id="CP001015">
    <property type="protein sequence ID" value="ACF54897.1"/>
    <property type="molecule type" value="Genomic_DNA"/>
</dbReference>
<dbReference type="SMR" id="B5E262"/>
<dbReference type="KEGG" id="spx:SPG_0498"/>
<dbReference type="HOGENOM" id="CLU_070525_2_0_9"/>
<dbReference type="GO" id="GO:0005829">
    <property type="term" value="C:cytosol"/>
    <property type="evidence" value="ECO:0007669"/>
    <property type="project" value="TreeGrafter"/>
</dbReference>
<dbReference type="GO" id="GO:0000028">
    <property type="term" value="P:ribosomal small subunit assembly"/>
    <property type="evidence" value="ECO:0007669"/>
    <property type="project" value="TreeGrafter"/>
</dbReference>
<dbReference type="GO" id="GO:0006412">
    <property type="term" value="P:translation"/>
    <property type="evidence" value="ECO:0007669"/>
    <property type="project" value="TreeGrafter"/>
</dbReference>
<dbReference type="CDD" id="cd01734">
    <property type="entry name" value="YlxS_C"/>
    <property type="match status" value="1"/>
</dbReference>
<dbReference type="Gene3D" id="2.30.30.180">
    <property type="entry name" value="Ribosome maturation factor RimP, C-terminal domain"/>
    <property type="match status" value="1"/>
</dbReference>
<dbReference type="Gene3D" id="3.30.300.70">
    <property type="entry name" value="RimP-like superfamily, N-terminal"/>
    <property type="match status" value="1"/>
</dbReference>
<dbReference type="HAMAP" id="MF_01077">
    <property type="entry name" value="RimP"/>
    <property type="match status" value="1"/>
</dbReference>
<dbReference type="InterPro" id="IPR003728">
    <property type="entry name" value="Ribosome_maturation_RimP"/>
</dbReference>
<dbReference type="InterPro" id="IPR028998">
    <property type="entry name" value="RimP_C"/>
</dbReference>
<dbReference type="InterPro" id="IPR036847">
    <property type="entry name" value="RimP_C_sf"/>
</dbReference>
<dbReference type="InterPro" id="IPR028989">
    <property type="entry name" value="RimP_N"/>
</dbReference>
<dbReference type="InterPro" id="IPR035956">
    <property type="entry name" value="RimP_N_sf"/>
</dbReference>
<dbReference type="NCBIfam" id="NF000928">
    <property type="entry name" value="PRK00092.1-2"/>
    <property type="match status" value="1"/>
</dbReference>
<dbReference type="PANTHER" id="PTHR33867">
    <property type="entry name" value="RIBOSOME MATURATION FACTOR RIMP"/>
    <property type="match status" value="1"/>
</dbReference>
<dbReference type="PANTHER" id="PTHR33867:SF1">
    <property type="entry name" value="RIBOSOME MATURATION FACTOR RIMP"/>
    <property type="match status" value="1"/>
</dbReference>
<dbReference type="Pfam" id="PF17384">
    <property type="entry name" value="DUF150_C"/>
    <property type="match status" value="1"/>
</dbReference>
<dbReference type="Pfam" id="PF02576">
    <property type="entry name" value="RimP_N"/>
    <property type="match status" value="1"/>
</dbReference>
<dbReference type="SUPFAM" id="SSF74942">
    <property type="entry name" value="YhbC-like, C-terminal domain"/>
    <property type="match status" value="1"/>
</dbReference>
<dbReference type="SUPFAM" id="SSF75420">
    <property type="entry name" value="YhbC-like, N-terminal domain"/>
    <property type="match status" value="1"/>
</dbReference>
<gene>
    <name evidence="1" type="primary">rimP</name>
    <name type="ordered locus">SPG_0498</name>
</gene>
<organism>
    <name type="scientific">Streptococcus pneumoniae serotype 19F (strain G54)</name>
    <dbReference type="NCBI Taxonomy" id="512566"/>
    <lineage>
        <taxon>Bacteria</taxon>
        <taxon>Bacillati</taxon>
        <taxon>Bacillota</taxon>
        <taxon>Bacilli</taxon>
        <taxon>Lactobacillales</taxon>
        <taxon>Streptococcaceae</taxon>
        <taxon>Streptococcus</taxon>
    </lineage>
</organism>
<feature type="chain" id="PRO_1000136798" description="Ribosome maturation factor RimP">
    <location>
        <begin position="1"/>
        <end position="159"/>
    </location>
</feature>
<proteinExistence type="inferred from homology"/>
<sequence length="159" mass="17746">MDAIATIVELVREVVEPVIEAPFELVDIEYGKIGSDMILSIFVDKPEGITLNDTADLTEIISPVLDTIKPDPFPEQYFLEITSPGLERPLKTKDAVAGAVGKYIHVGLYQAIDKQKVFEGTLLAFEEDELTMEYMDKTRKKTVQIPYSLVSKARLAVKL</sequence>
<name>RIMP_STRP4</name>
<comment type="function">
    <text evidence="1">Required for maturation of 30S ribosomal subunits.</text>
</comment>
<comment type="subcellular location">
    <subcellularLocation>
        <location evidence="1">Cytoplasm</location>
    </subcellularLocation>
</comment>
<comment type="similarity">
    <text evidence="1">Belongs to the RimP family.</text>
</comment>
<keyword id="KW-0963">Cytoplasm</keyword>
<keyword id="KW-0690">Ribosome biogenesis</keyword>
<accession>B5E262</accession>
<reference key="1">
    <citation type="journal article" date="2001" name="Microb. Drug Resist.">
        <title>Annotated draft genomic sequence from a Streptococcus pneumoniae type 19F clinical isolate.</title>
        <authorList>
            <person name="Dopazo J."/>
            <person name="Mendoza A."/>
            <person name="Herrero J."/>
            <person name="Caldara F."/>
            <person name="Humbert Y."/>
            <person name="Friedli L."/>
            <person name="Guerrier M."/>
            <person name="Grand-Schenk E."/>
            <person name="Gandin C."/>
            <person name="de Francesco M."/>
            <person name="Polissi A."/>
            <person name="Buell G."/>
            <person name="Feger G."/>
            <person name="Garcia E."/>
            <person name="Peitsch M."/>
            <person name="Garcia-Bustos J.F."/>
        </authorList>
    </citation>
    <scope>NUCLEOTIDE SEQUENCE [LARGE SCALE GENOMIC DNA]</scope>
    <source>
        <strain>G54</strain>
    </source>
</reference>
<reference key="2">
    <citation type="submission" date="2008-03" db="EMBL/GenBank/DDBJ databases">
        <title>Pneumococcal beta glucoside metabolism investigated by whole genome comparison.</title>
        <authorList>
            <person name="Mulas L."/>
            <person name="Trappetti C."/>
            <person name="Hakenbeck R."/>
            <person name="Iannelli F."/>
            <person name="Pozzi G."/>
            <person name="Davidsen T.M."/>
            <person name="Tettelin H."/>
            <person name="Oggioni M."/>
        </authorList>
    </citation>
    <scope>NUCLEOTIDE SEQUENCE [LARGE SCALE GENOMIC DNA]</scope>
    <source>
        <strain>G54</strain>
    </source>
</reference>
<protein>
    <recommendedName>
        <fullName evidence="1">Ribosome maturation factor RimP</fullName>
    </recommendedName>
</protein>
<evidence type="ECO:0000255" key="1">
    <source>
        <dbReference type="HAMAP-Rule" id="MF_01077"/>
    </source>
</evidence>